<gene>
    <name type="primary">Dnttip1</name>
    <name type="synonym">Tdif1</name>
</gene>
<comment type="function">
    <text evidence="1">Increases DNTT terminal deoxynucleotidyltransferase activity (in vitro). Also acts as a transcriptional regulator, binding to the consensus sequence 5'-GNTGCATG-3' following an AT-tract. Associates with RAB20 promoter and positively regulates its transcription. Binds DNA and nucleosomes; may recruit HDAC1 complexes to nucleosomes or naked DNA.</text>
</comment>
<comment type="subunit">
    <text evidence="1 4 5 6">Monomer and homodimer (By similarity). A minor proportion may form homotrimers (By similarity). Interacts with ZNF541 (PubMed:18849567). Interacts with the terminal deoxynucleotidyltransferase DNTT (By similarity). Interacts with TRERF1 (By similarity). Identified in a histone deacetylase complex that contains DNTTIP1, HDAC1 and MIDEAS; this complex assembles into a tetramer that contains four copies of each protein chain (By similarity). Component of a histone deacetylase complex containing DNTTIP1, ZNF541, HDAC1 and HDAC2 (By similarity). Identified in a complex with KCTD19, HDAC1, HDAC2 and ZNF541 (PubMed:34075040, PubMed:35341968).</text>
</comment>
<comment type="subcellular location">
    <subcellularLocation>
        <location evidence="1">Nucleus</location>
    </subcellularLocation>
</comment>
<comment type="domain">
    <text evidence="1">The N-terminal domain mediates dimerization.</text>
</comment>
<comment type="domain">
    <text evidence="1">The C-terminal domain mediates interaction with DNA and nucleosomes. It contains a HTH motif that mediates recognition of the consensus sequence.</text>
</comment>
<name>TDIF1_MOUSE</name>
<accession>Q99LB0</accession>
<sequence length="328" mass="36852">MGATGDTEQPRGPGGAERGGLELGDAGAAGQPVLTNPWNIMIKHRQVQRRGRRSQMTTSFTDPAISMDLLRAVLQPSINEEIQGVFNKYMKFFQKAALNVRDNVGEEVDAEQLIQEACRSCLEQAKLLFSDGEKVIPRLAHELPGIKRGRQAEEESHRGSPIPKKRKGRPPGHVLSNDRAAAGMVWKQKSCEPIRREGPKWDPARLNESTTFVLGSRANKALGMGGTRGRIYIKHPHLFKYAADPQDKHWLAEQHHMRATGGKMAYLLIEEDIRDLAASDDYRGCLDLKLEELKSFVLPSWMVEKMRKYMETLRTENEHRAAEAPPQT</sequence>
<organism>
    <name type="scientific">Mus musculus</name>
    <name type="common">Mouse</name>
    <dbReference type="NCBI Taxonomy" id="10090"/>
    <lineage>
        <taxon>Eukaryota</taxon>
        <taxon>Metazoa</taxon>
        <taxon>Chordata</taxon>
        <taxon>Craniata</taxon>
        <taxon>Vertebrata</taxon>
        <taxon>Euteleostomi</taxon>
        <taxon>Mammalia</taxon>
        <taxon>Eutheria</taxon>
        <taxon>Euarchontoglires</taxon>
        <taxon>Glires</taxon>
        <taxon>Rodentia</taxon>
        <taxon>Myomorpha</taxon>
        <taxon>Muroidea</taxon>
        <taxon>Muridae</taxon>
        <taxon>Murinae</taxon>
        <taxon>Mus</taxon>
        <taxon>Mus</taxon>
    </lineage>
</organism>
<dbReference type="EMBL" id="AB045974">
    <property type="protein sequence ID" value="BAB82521.1"/>
    <property type="molecule type" value="mRNA"/>
</dbReference>
<dbReference type="EMBL" id="BC003486">
    <property type="protein sequence ID" value="AAH03486.1"/>
    <property type="molecule type" value="mRNA"/>
</dbReference>
<dbReference type="CCDS" id="CCDS17054.1"/>
<dbReference type="RefSeq" id="NP_598524.1">
    <property type="nucleotide sequence ID" value="NM_133763.1"/>
</dbReference>
<dbReference type="BMRB" id="Q99LB0"/>
<dbReference type="SMR" id="Q99LB0"/>
<dbReference type="BioGRID" id="218041">
    <property type="interactions" value="2"/>
</dbReference>
<dbReference type="FunCoup" id="Q99LB0">
    <property type="interactions" value="3238"/>
</dbReference>
<dbReference type="IntAct" id="Q99LB0">
    <property type="interactions" value="1"/>
</dbReference>
<dbReference type="MINT" id="Q99LB0"/>
<dbReference type="STRING" id="10090.ENSMUSP00000017443"/>
<dbReference type="iPTMnet" id="Q99LB0"/>
<dbReference type="PhosphoSitePlus" id="Q99LB0"/>
<dbReference type="jPOST" id="Q99LB0"/>
<dbReference type="PaxDb" id="10090-ENSMUSP00000017443"/>
<dbReference type="ProteomicsDB" id="262844"/>
<dbReference type="Pumba" id="Q99LB0"/>
<dbReference type="Antibodypedia" id="12850">
    <property type="antibodies" value="262 antibodies from 23 providers"/>
</dbReference>
<dbReference type="DNASU" id="76233"/>
<dbReference type="Ensembl" id="ENSMUST00000017443.14">
    <property type="protein sequence ID" value="ENSMUSP00000017443.8"/>
    <property type="gene ID" value="ENSMUSG00000017299.14"/>
</dbReference>
<dbReference type="GeneID" id="76233"/>
<dbReference type="KEGG" id="mmu:76233"/>
<dbReference type="UCSC" id="uc008nvx.1">
    <property type="organism name" value="mouse"/>
</dbReference>
<dbReference type="AGR" id="MGI:1923483"/>
<dbReference type="CTD" id="116092"/>
<dbReference type="MGI" id="MGI:1923483">
    <property type="gene designation" value="Dnttip1"/>
</dbReference>
<dbReference type="VEuPathDB" id="HostDB:ENSMUSG00000017299"/>
<dbReference type="eggNOG" id="KOG4801">
    <property type="taxonomic scope" value="Eukaryota"/>
</dbReference>
<dbReference type="GeneTree" id="ENSGT00510000047836"/>
<dbReference type="HOGENOM" id="CLU_073342_0_0_1"/>
<dbReference type="InParanoid" id="Q99LB0"/>
<dbReference type="OMA" id="LAENHHM"/>
<dbReference type="OrthoDB" id="5860246at2759"/>
<dbReference type="PhylomeDB" id="Q99LB0"/>
<dbReference type="TreeFam" id="TF329275"/>
<dbReference type="BioGRID-ORCS" id="76233">
    <property type="hits" value="12 hits in 76 CRISPR screens"/>
</dbReference>
<dbReference type="ChiTaRS" id="Dnttip1">
    <property type="organism name" value="mouse"/>
</dbReference>
<dbReference type="PRO" id="PR:Q99LB0"/>
<dbReference type="Proteomes" id="UP000000589">
    <property type="component" value="Chromosome 2"/>
</dbReference>
<dbReference type="RNAct" id="Q99LB0">
    <property type="molecule type" value="protein"/>
</dbReference>
<dbReference type="Bgee" id="ENSMUSG00000017299">
    <property type="expression patterns" value="Expressed in ear vesicle and 253 other cell types or tissues"/>
</dbReference>
<dbReference type="ExpressionAtlas" id="Q99LB0">
    <property type="expression patterns" value="baseline and differential"/>
</dbReference>
<dbReference type="GO" id="GO:0005694">
    <property type="term" value="C:chromosome"/>
    <property type="evidence" value="ECO:0007669"/>
    <property type="project" value="Ensembl"/>
</dbReference>
<dbReference type="GO" id="GO:0000118">
    <property type="term" value="C:histone deacetylase complex"/>
    <property type="evidence" value="ECO:0000250"/>
    <property type="project" value="UniProtKB"/>
</dbReference>
<dbReference type="GO" id="GO:0005730">
    <property type="term" value="C:nucleolus"/>
    <property type="evidence" value="ECO:0007669"/>
    <property type="project" value="Ensembl"/>
</dbReference>
<dbReference type="GO" id="GO:0005634">
    <property type="term" value="C:nucleus"/>
    <property type="evidence" value="ECO:0000250"/>
    <property type="project" value="UniProtKB"/>
</dbReference>
<dbReference type="GO" id="GO:0003677">
    <property type="term" value="F:DNA binding"/>
    <property type="evidence" value="ECO:0000250"/>
    <property type="project" value="UniProtKB"/>
</dbReference>
<dbReference type="GO" id="GO:0008047">
    <property type="term" value="F:enzyme activator activity"/>
    <property type="evidence" value="ECO:0000266"/>
    <property type="project" value="MGI"/>
</dbReference>
<dbReference type="GO" id="GO:0031491">
    <property type="term" value="F:nucleosome binding"/>
    <property type="evidence" value="ECO:0000250"/>
    <property type="project" value="UniProtKB"/>
</dbReference>
<dbReference type="GO" id="GO:0042803">
    <property type="term" value="F:protein homodimerization activity"/>
    <property type="evidence" value="ECO:0000266"/>
    <property type="project" value="MGI"/>
</dbReference>
<dbReference type="InterPro" id="IPR041384">
    <property type="entry name" value="DNTTIP1_dimer"/>
</dbReference>
<dbReference type="InterPro" id="IPR026064">
    <property type="entry name" value="TdIF1"/>
</dbReference>
<dbReference type="InterPro" id="IPR049121">
    <property type="entry name" value="TdIF1_C"/>
</dbReference>
<dbReference type="PANTHER" id="PTHR23399">
    <property type="entry name" value="DEOXYNUCLEOTIDYLTRANSFERASE TERMINAL-INTERACTING PROTEIN 1"/>
    <property type="match status" value="1"/>
</dbReference>
<dbReference type="PANTHER" id="PTHR23399:SF2">
    <property type="entry name" value="DEOXYNUCLEOTIDYLTRANSFERASE TERMINAL-INTERACTING PROTEIN 1"/>
    <property type="match status" value="1"/>
</dbReference>
<dbReference type="Pfam" id="PF18192">
    <property type="entry name" value="DNTTIP1_dimer"/>
    <property type="match status" value="1"/>
</dbReference>
<dbReference type="Pfam" id="PF21229">
    <property type="entry name" value="TdIF1_2nd"/>
    <property type="match status" value="1"/>
</dbReference>
<feature type="chain" id="PRO_0000072474" description="Deoxynucleotidyltransferase terminal-interacting protein 1">
    <location>
        <begin position="1"/>
        <end position="328"/>
    </location>
</feature>
<feature type="DNA-binding region" description="A.T hook" evidence="7">
    <location>
        <begin position="158"/>
        <end position="172"/>
    </location>
</feature>
<feature type="DNA-binding region" description="H-T-H motif" evidence="7">
    <location>
        <begin position="215"/>
        <end position="236"/>
    </location>
</feature>
<feature type="region of interest" description="Disordered" evidence="3">
    <location>
        <begin position="1"/>
        <end position="30"/>
    </location>
</feature>
<feature type="region of interest" description="Important for dimerization" evidence="1">
    <location>
        <begin position="56"/>
        <end position="147"/>
    </location>
</feature>
<feature type="region of interest" description="Disordered" evidence="3">
    <location>
        <begin position="142"/>
        <end position="176"/>
    </location>
</feature>
<feature type="region of interest" description="Important for DNA and nucleosome binding" evidence="1">
    <location>
        <begin position="196"/>
        <end position="315"/>
    </location>
</feature>
<feature type="short sequence motif" description="Nuclear localization signal" evidence="2">
    <location>
        <begin position="163"/>
        <end position="169"/>
    </location>
</feature>
<feature type="compositionally biased region" description="Gly residues" evidence="3">
    <location>
        <begin position="12"/>
        <end position="22"/>
    </location>
</feature>
<feature type="compositionally biased region" description="Basic and acidic residues" evidence="3">
    <location>
        <begin position="142"/>
        <end position="158"/>
    </location>
</feature>
<feature type="modified residue" description="Phosphoserine" evidence="1">
    <location>
        <position position="160"/>
    </location>
</feature>
<proteinExistence type="evidence at protein level"/>
<reference key="1">
    <citation type="journal article" date="2001" name="Genes Cells">
        <title>Terminal deoxynucleotidyltransferase directly interacts with a novel nuclear protein that is homologous to p65.</title>
        <authorList>
            <person name="Yamashita N."/>
            <person name="Shimazaki N."/>
            <person name="Ibe S."/>
            <person name="Kaneko R."/>
            <person name="Tanabe A."/>
            <person name="Toyomoto T."/>
            <person name="Fujita K."/>
            <person name="Hasegawa T."/>
            <person name="Toji S."/>
            <person name="Tamai K."/>
            <person name="Yamamoto H."/>
            <person name="Koiwai O."/>
        </authorList>
    </citation>
    <scope>NUCLEOTIDE SEQUENCE [MRNA]</scope>
    <source>
        <tissue>Thymus</tissue>
    </source>
</reference>
<reference key="2">
    <citation type="journal article" date="2004" name="Genome Res.">
        <title>The status, quality, and expansion of the NIH full-length cDNA project: the Mammalian Gene Collection (MGC).</title>
        <authorList>
            <consortium name="The MGC Project Team"/>
        </authorList>
    </citation>
    <scope>NUCLEOTIDE SEQUENCE [LARGE SCALE MRNA]</scope>
</reference>
<reference key="3">
    <citation type="journal article" date="2008" name="J. Biol. Chem.">
        <title>A novel germ cell-specific protein, SHIP1, forms a complex with chromatin remodeling activity during spermatogenesis.</title>
        <authorList>
            <person name="Choi E."/>
            <person name="Han C."/>
            <person name="Park I."/>
            <person name="Lee B."/>
            <person name="Jin S."/>
            <person name="Choi H."/>
            <person name="Kim do H."/>
            <person name="Park Z.Y."/>
            <person name="Eddy E.M."/>
            <person name="Cho C."/>
        </authorList>
    </citation>
    <scope>INTERACTION WITH ZNF541</scope>
    <scope>IDENTIFICATION BY MASS SPECTROMETRY</scope>
</reference>
<reference key="4">
    <citation type="journal article" date="2010" name="Cell">
        <title>A tissue-specific atlas of mouse protein phosphorylation and expression.</title>
        <authorList>
            <person name="Huttlin E.L."/>
            <person name="Jedrychowski M.P."/>
            <person name="Elias J.E."/>
            <person name="Goswami T."/>
            <person name="Rad R."/>
            <person name="Beausoleil S.A."/>
            <person name="Villen J."/>
            <person name="Haas W."/>
            <person name="Sowa M.E."/>
            <person name="Gygi S.P."/>
        </authorList>
    </citation>
    <scope>IDENTIFICATION BY MASS SPECTROMETRY [LARGE SCALE ANALYSIS]</scope>
    <source>
        <tissue>Spleen</tissue>
        <tissue>Testis</tissue>
    </source>
</reference>
<reference key="5">
    <citation type="journal article" date="2021" name="Nat. Commun.">
        <title>Meiosis-specific ZFP541 repressor complex promotes developmental progression of meiotic prophase towards completion during mouse spermatogenesis.</title>
        <authorList>
            <person name="Horisawa-Takada Y."/>
            <person name="Kodera C."/>
            <person name="Takemoto K."/>
            <person name="Sakashita A."/>
            <person name="Horisawa K."/>
            <person name="Maeda R."/>
            <person name="Shimada R."/>
            <person name="Usuki S."/>
            <person name="Fujimura S."/>
            <person name="Tani N."/>
            <person name="Matsuura K."/>
            <person name="Akiyama T."/>
            <person name="Suzuki A."/>
            <person name="Niwa H."/>
            <person name="Tachibana M."/>
            <person name="Ohba T."/>
            <person name="Katabuchi H."/>
            <person name="Namekawa S.H."/>
            <person name="Araki K."/>
            <person name="Ishiguro K.I."/>
        </authorList>
    </citation>
    <scope>IDENTIFICATION IN A COMPLEX WITH KCTD19; HDAC1; HDAC2 AND ZNF541</scope>
</reference>
<reference key="6">
    <citation type="journal article" date="2022" name="J. Genet. Genomics">
        <title>The ZFP541-KCTD19 complex is essential for pachytene progression by activating meiotic genes during mouse spermatogenesis.</title>
        <authorList>
            <person name="Li Y."/>
            <person name="Meng R."/>
            <person name="Li S."/>
            <person name="Gu B."/>
            <person name="Xu X."/>
            <person name="Zhang H."/>
            <person name="Tan X."/>
            <person name="Shao T."/>
            <person name="Wang J."/>
            <person name="Xu D."/>
            <person name="Wang F."/>
        </authorList>
    </citation>
    <scope>IDENTIFICATION IN A COMPLEX WITH KCTD19; HDAC1; HDAC2 AND ZNF541</scope>
</reference>
<protein>
    <recommendedName>
        <fullName>Deoxynucleotidyltransferase terminal-interacting protein 1</fullName>
    </recommendedName>
    <alternativeName>
        <fullName>Terminal deoxynucleotidyltransferase-interacting factor 1</fullName>
        <shortName>TdIF1</shortName>
        <shortName>TdT-interacting factor 1</shortName>
    </alternativeName>
</protein>
<keyword id="KW-0238">DNA-binding</keyword>
<keyword id="KW-0539">Nucleus</keyword>
<keyword id="KW-0597">Phosphoprotein</keyword>
<keyword id="KW-1185">Reference proteome</keyword>
<keyword id="KW-0804">Transcription</keyword>
<keyword id="KW-0805">Transcription regulation</keyword>
<evidence type="ECO:0000250" key="1">
    <source>
        <dbReference type="UniProtKB" id="Q9H147"/>
    </source>
</evidence>
<evidence type="ECO:0000255" key="2"/>
<evidence type="ECO:0000256" key="3">
    <source>
        <dbReference type="SAM" id="MobiDB-lite"/>
    </source>
</evidence>
<evidence type="ECO:0000269" key="4">
    <source>
    </source>
</evidence>
<evidence type="ECO:0000269" key="5">
    <source>
    </source>
</evidence>
<evidence type="ECO:0000269" key="6">
    <source>
    </source>
</evidence>
<evidence type="ECO:0000305" key="7"/>